<reference key="1">
    <citation type="journal article" date="1998" name="Nature">
        <title>The complete genome of the hyperthermophilic bacterium Aquifex aeolicus.</title>
        <authorList>
            <person name="Deckert G."/>
            <person name="Warren P.V."/>
            <person name="Gaasterland T."/>
            <person name="Young W.G."/>
            <person name="Lenox A.L."/>
            <person name="Graham D.E."/>
            <person name="Overbeek R."/>
            <person name="Snead M.A."/>
            <person name="Keller M."/>
            <person name="Aujay M."/>
            <person name="Huber R."/>
            <person name="Feldman R.A."/>
            <person name="Short J.M."/>
            <person name="Olsen G.J."/>
            <person name="Swanson R.V."/>
        </authorList>
    </citation>
    <scope>NUCLEOTIDE SEQUENCE [LARGE SCALE GENOMIC DNA]</scope>
    <source>
        <strain>VF5</strain>
    </source>
</reference>
<keyword id="KW-0002">3D-structure</keyword>
<keyword id="KW-1185">Reference proteome</keyword>
<keyword id="KW-0694">RNA-binding</keyword>
<keyword id="KW-0804">Transcription</keyword>
<keyword id="KW-0889">Transcription antitermination</keyword>
<keyword id="KW-0805">Transcription regulation</keyword>
<organism>
    <name type="scientific">Aquifex aeolicus (strain VF5)</name>
    <dbReference type="NCBI Taxonomy" id="224324"/>
    <lineage>
        <taxon>Bacteria</taxon>
        <taxon>Pseudomonadati</taxon>
        <taxon>Aquificota</taxon>
        <taxon>Aquificia</taxon>
        <taxon>Aquificales</taxon>
        <taxon>Aquificaceae</taxon>
        <taxon>Aquifex</taxon>
    </lineage>
</organism>
<gene>
    <name evidence="1" type="primary">nusB</name>
    <name type="ordered locus">aq_133</name>
</gene>
<evidence type="ECO:0000255" key="1">
    <source>
        <dbReference type="HAMAP-Rule" id="MF_00073"/>
    </source>
</evidence>
<evidence type="ECO:0000305" key="2"/>
<evidence type="ECO:0007829" key="3">
    <source>
        <dbReference type="PDB" id="2JR0"/>
    </source>
</evidence>
<evidence type="ECO:0007829" key="4">
    <source>
        <dbReference type="PDB" id="3R2C"/>
    </source>
</evidence>
<name>NUSB_AQUAE</name>
<accession>O66530</accession>
<dbReference type="EMBL" id="AE000657">
    <property type="protein sequence ID" value="AAC06491.1"/>
    <property type="molecule type" value="Genomic_DNA"/>
</dbReference>
<dbReference type="PIR" id="G70312">
    <property type="entry name" value="G70312"/>
</dbReference>
<dbReference type="RefSeq" id="NP_213090.1">
    <property type="nucleotide sequence ID" value="NC_000918.1"/>
</dbReference>
<dbReference type="RefSeq" id="WP_010880028.1">
    <property type="nucleotide sequence ID" value="NC_000918.1"/>
</dbReference>
<dbReference type="PDB" id="2JR0">
    <property type="method" value="NMR"/>
    <property type="chains" value="A=1-148"/>
</dbReference>
<dbReference type="PDB" id="3R2C">
    <property type="method" value="X-ray"/>
    <property type="resolution" value="1.90 A"/>
    <property type="chains" value="A/B=1-148"/>
</dbReference>
<dbReference type="PDB" id="3R2D">
    <property type="method" value="X-ray"/>
    <property type="resolution" value="2.20 A"/>
    <property type="chains" value="A/B=1-148"/>
</dbReference>
<dbReference type="PDB" id="4EYA">
    <property type="method" value="X-ray"/>
    <property type="resolution" value="3.20 A"/>
    <property type="chains" value="A/B/C/D/E/F/G/H=1-148"/>
</dbReference>
<dbReference type="PDBsum" id="2JR0"/>
<dbReference type="PDBsum" id="3R2C"/>
<dbReference type="PDBsum" id="3R2D"/>
<dbReference type="PDBsum" id="4EYA"/>
<dbReference type="BMRB" id="O66530"/>
<dbReference type="SMR" id="O66530"/>
<dbReference type="FunCoup" id="O66530">
    <property type="interactions" value="291"/>
</dbReference>
<dbReference type="STRING" id="224324.aq_133"/>
<dbReference type="EnsemblBacteria" id="AAC06491">
    <property type="protein sequence ID" value="AAC06491"/>
    <property type="gene ID" value="aq_133"/>
</dbReference>
<dbReference type="KEGG" id="aae:aq_133"/>
<dbReference type="eggNOG" id="COG0781">
    <property type="taxonomic scope" value="Bacteria"/>
</dbReference>
<dbReference type="HOGENOM" id="CLU_087843_3_0_0"/>
<dbReference type="InParanoid" id="O66530"/>
<dbReference type="OrthoDB" id="9797817at2"/>
<dbReference type="EvolutionaryTrace" id="O66530"/>
<dbReference type="Proteomes" id="UP000000798">
    <property type="component" value="Chromosome"/>
</dbReference>
<dbReference type="GO" id="GO:0005829">
    <property type="term" value="C:cytosol"/>
    <property type="evidence" value="ECO:0000318"/>
    <property type="project" value="GO_Central"/>
</dbReference>
<dbReference type="GO" id="GO:0003723">
    <property type="term" value="F:RNA binding"/>
    <property type="evidence" value="ECO:0007669"/>
    <property type="project" value="UniProtKB-UniRule"/>
</dbReference>
<dbReference type="GO" id="GO:0006353">
    <property type="term" value="P:DNA-templated transcription termination"/>
    <property type="evidence" value="ECO:0007669"/>
    <property type="project" value="UniProtKB-UniRule"/>
</dbReference>
<dbReference type="GO" id="GO:0031564">
    <property type="term" value="P:transcription antitermination"/>
    <property type="evidence" value="ECO:0007669"/>
    <property type="project" value="UniProtKB-KW"/>
</dbReference>
<dbReference type="CDD" id="cd00619">
    <property type="entry name" value="Terminator_NusB"/>
    <property type="match status" value="1"/>
</dbReference>
<dbReference type="Gene3D" id="1.10.940.10">
    <property type="entry name" value="NusB-like"/>
    <property type="match status" value="1"/>
</dbReference>
<dbReference type="HAMAP" id="MF_00073">
    <property type="entry name" value="NusB"/>
    <property type="match status" value="1"/>
</dbReference>
<dbReference type="InterPro" id="IPR035926">
    <property type="entry name" value="NusB-like_sf"/>
</dbReference>
<dbReference type="InterPro" id="IPR011605">
    <property type="entry name" value="NusB_fam"/>
</dbReference>
<dbReference type="InterPro" id="IPR006027">
    <property type="entry name" value="NusB_RsmB_TIM44"/>
</dbReference>
<dbReference type="NCBIfam" id="TIGR01951">
    <property type="entry name" value="nusB"/>
    <property type="match status" value="1"/>
</dbReference>
<dbReference type="PANTHER" id="PTHR11078:SF3">
    <property type="entry name" value="ANTITERMINATION NUSB DOMAIN-CONTAINING PROTEIN"/>
    <property type="match status" value="1"/>
</dbReference>
<dbReference type="PANTHER" id="PTHR11078">
    <property type="entry name" value="N UTILIZATION SUBSTANCE PROTEIN B-RELATED"/>
    <property type="match status" value="1"/>
</dbReference>
<dbReference type="Pfam" id="PF01029">
    <property type="entry name" value="NusB"/>
    <property type="match status" value="1"/>
</dbReference>
<dbReference type="SUPFAM" id="SSF48013">
    <property type="entry name" value="NusB-like"/>
    <property type="match status" value="1"/>
</dbReference>
<protein>
    <recommendedName>
        <fullName evidence="1">Transcription antitermination protein NusB</fullName>
    </recommendedName>
    <alternativeName>
        <fullName evidence="1">Antitermination factor NusB</fullName>
    </alternativeName>
</protein>
<comment type="function">
    <text evidence="1">Involved in transcription antitermination. Required for transcription of ribosomal RNA (rRNA) genes. Binds specifically to the boxA antiterminator sequence of the ribosomal RNA (rrn) operons.</text>
</comment>
<comment type="similarity">
    <text evidence="1 2">Belongs to the NusB family.</text>
</comment>
<feature type="chain" id="PRO_0000176504" description="Transcription antitermination protein NusB">
    <location>
        <begin position="1"/>
        <end position="148"/>
    </location>
</feature>
<feature type="helix" evidence="4">
    <location>
        <begin position="3"/>
        <end position="21"/>
    </location>
</feature>
<feature type="helix" evidence="4">
    <location>
        <begin position="25"/>
        <end position="36"/>
    </location>
</feature>
<feature type="helix" evidence="4">
    <location>
        <begin position="41"/>
        <end position="56"/>
    </location>
</feature>
<feature type="helix" evidence="4">
    <location>
        <begin position="58"/>
        <end position="66"/>
    </location>
</feature>
<feature type="turn" evidence="4">
    <location>
        <begin position="67"/>
        <end position="71"/>
    </location>
</feature>
<feature type="helix" evidence="4">
    <location>
        <begin position="74"/>
        <end position="76"/>
    </location>
</feature>
<feature type="helix" evidence="4">
    <location>
        <begin position="79"/>
        <end position="92"/>
    </location>
</feature>
<feature type="turn" evidence="3">
    <location>
        <begin position="93"/>
        <end position="95"/>
    </location>
</feature>
<feature type="helix" evidence="4">
    <location>
        <begin position="100"/>
        <end position="114"/>
    </location>
</feature>
<feature type="helix" evidence="4">
    <location>
        <begin position="117"/>
        <end position="137"/>
    </location>
</feature>
<proteinExistence type="evidence at protein level"/>
<sequence>MRYRKGARDTAFLVLYRWDLRGENPGELFKEVVEEKNIKNKDAYEYAKKLVDTAVRHIEEIDSIIEKHLKGWSIDRLGYVERNALRLGVAELIFLKSKEPGRVFIDIVDLVKKYADEKAGKFVNGVLSAIYKAYITSSKEEKPSLKSE</sequence>